<proteinExistence type="evidence at transcript level"/>
<evidence type="ECO:0000305" key="1"/>
<organism>
    <name type="scientific">Arabidopsis thaliana</name>
    <name type="common">Mouse-ear cress</name>
    <dbReference type="NCBI Taxonomy" id="3702"/>
    <lineage>
        <taxon>Eukaryota</taxon>
        <taxon>Viridiplantae</taxon>
        <taxon>Streptophyta</taxon>
        <taxon>Embryophyta</taxon>
        <taxon>Tracheophyta</taxon>
        <taxon>Spermatophyta</taxon>
        <taxon>Magnoliopsida</taxon>
        <taxon>eudicotyledons</taxon>
        <taxon>Gunneridae</taxon>
        <taxon>Pentapetalae</taxon>
        <taxon>rosids</taxon>
        <taxon>malvids</taxon>
        <taxon>Brassicales</taxon>
        <taxon>Brassicaceae</taxon>
        <taxon>Camelineae</taxon>
        <taxon>Arabidopsis</taxon>
    </lineage>
</organism>
<comment type="similarity">
    <text evidence="1">Belongs to the PPR family. PCMP-E subfamily.</text>
</comment>
<comment type="online information" name="Pentatricopeptide repeat proteins">
    <link uri="https://ppr.plantenergy.uwa.edu.au"/>
</comment>
<gene>
    <name type="primary">PCMP-E78</name>
    <name type="ordered locus">At2g20540</name>
    <name type="ORF">T13C7.13</name>
</gene>
<name>PP165_ARATH</name>
<feature type="chain" id="PRO_0000356024" description="Pentatricopeptide repeat-containing protein At2g20540">
    <location>
        <begin position="1"/>
        <end position="534"/>
    </location>
</feature>
<feature type="repeat" description="PPR 1">
    <location>
        <begin position="41"/>
        <end position="71"/>
    </location>
</feature>
<feature type="repeat" description="PPR 2">
    <location>
        <begin position="72"/>
        <end position="106"/>
    </location>
</feature>
<feature type="repeat" description="PPR 3">
    <location>
        <begin position="108"/>
        <end position="142"/>
    </location>
</feature>
<feature type="repeat" description="PPR 4">
    <location>
        <begin position="143"/>
        <end position="173"/>
    </location>
</feature>
<feature type="repeat" description="PPR 5">
    <location>
        <begin position="174"/>
        <end position="208"/>
    </location>
</feature>
<feature type="repeat" description="PPR 6">
    <location>
        <begin position="209"/>
        <end position="239"/>
    </location>
</feature>
<feature type="repeat" description="PPR 7">
    <location>
        <begin position="240"/>
        <end position="274"/>
    </location>
</feature>
<feature type="repeat" description="PPR 8">
    <location>
        <begin position="275"/>
        <end position="305"/>
    </location>
</feature>
<feature type="repeat" description="PPR 9">
    <location>
        <begin position="306"/>
        <end position="340"/>
    </location>
</feature>
<feature type="repeat" description="PPR 10">
    <location>
        <begin position="341"/>
        <end position="371"/>
    </location>
</feature>
<feature type="repeat" description="PPR 11">
    <location>
        <begin position="377"/>
        <end position="407"/>
    </location>
</feature>
<feature type="region of interest" description="Type E motif">
    <location>
        <begin position="412"/>
        <end position="487"/>
    </location>
</feature>
<feature type="region of interest" description="Type E(+) motif">
    <location>
        <begin position="488"/>
        <end position="518"/>
    </location>
</feature>
<dbReference type="EMBL" id="AC007109">
    <property type="protein sequence ID" value="AAD25654.1"/>
    <property type="molecule type" value="Genomic_DNA"/>
</dbReference>
<dbReference type="EMBL" id="CP002685">
    <property type="protein sequence ID" value="AEC07025.1"/>
    <property type="molecule type" value="Genomic_DNA"/>
</dbReference>
<dbReference type="EMBL" id="DQ056537">
    <property type="protein sequence ID" value="AAY78689.1"/>
    <property type="molecule type" value="mRNA"/>
</dbReference>
<dbReference type="PIR" id="E84590">
    <property type="entry name" value="E84590"/>
</dbReference>
<dbReference type="SMR" id="Q9SIL5"/>
<dbReference type="BioGRID" id="1929">
    <property type="interactions" value="3"/>
</dbReference>
<dbReference type="FunCoup" id="Q9SIL5">
    <property type="interactions" value="115"/>
</dbReference>
<dbReference type="STRING" id="3702.Q9SIL5"/>
<dbReference type="PaxDb" id="3702-AT2G20540.1"/>
<dbReference type="ProteomicsDB" id="249139"/>
<dbReference type="EnsemblPlants" id="AT2G20540.1">
    <property type="protein sequence ID" value="AT2G20540.1"/>
    <property type="gene ID" value="AT2G20540"/>
</dbReference>
<dbReference type="GeneID" id="816576"/>
<dbReference type="Gramene" id="AT2G20540.1">
    <property type="protein sequence ID" value="AT2G20540.1"/>
    <property type="gene ID" value="AT2G20540"/>
</dbReference>
<dbReference type="KEGG" id="ath:AT2G20540"/>
<dbReference type="Araport" id="AT2G20540"/>
<dbReference type="TAIR" id="AT2G20540">
    <property type="gene designation" value="MEF21"/>
</dbReference>
<dbReference type="eggNOG" id="KOG4197">
    <property type="taxonomic scope" value="Eukaryota"/>
</dbReference>
<dbReference type="HOGENOM" id="CLU_002706_0_6_1"/>
<dbReference type="InParanoid" id="Q9SIL5"/>
<dbReference type="OMA" id="FRRMQMV"/>
<dbReference type="OrthoDB" id="185373at2759"/>
<dbReference type="PhylomeDB" id="Q9SIL5"/>
<dbReference type="PRO" id="PR:Q9SIL5"/>
<dbReference type="Proteomes" id="UP000006548">
    <property type="component" value="Chromosome 2"/>
</dbReference>
<dbReference type="ExpressionAtlas" id="Q9SIL5">
    <property type="expression patterns" value="baseline and differential"/>
</dbReference>
<dbReference type="GO" id="GO:0005739">
    <property type="term" value="C:mitochondrion"/>
    <property type="evidence" value="ECO:0007669"/>
    <property type="project" value="GOC"/>
</dbReference>
<dbReference type="GO" id="GO:0003723">
    <property type="term" value="F:RNA binding"/>
    <property type="evidence" value="ECO:0007669"/>
    <property type="project" value="InterPro"/>
</dbReference>
<dbReference type="GO" id="GO:0080156">
    <property type="term" value="P:mitochondrial mRNA modification"/>
    <property type="evidence" value="ECO:0000315"/>
    <property type="project" value="TAIR"/>
</dbReference>
<dbReference type="FunFam" id="1.25.40.10:FF:000280">
    <property type="entry name" value="Pentatricopeptide repeat-containing protein"/>
    <property type="match status" value="1"/>
</dbReference>
<dbReference type="FunFam" id="1.25.40.10:FF:001214">
    <property type="entry name" value="Pentatricopeptide repeat-containing protein At2g20540"/>
    <property type="match status" value="1"/>
</dbReference>
<dbReference type="FunFam" id="1.25.40.10:FF:000031">
    <property type="entry name" value="Pentatricopeptide repeat-containing protein mitochondrial"/>
    <property type="match status" value="1"/>
</dbReference>
<dbReference type="Gene3D" id="1.25.40.10">
    <property type="entry name" value="Tetratricopeptide repeat domain"/>
    <property type="match status" value="3"/>
</dbReference>
<dbReference type="InterPro" id="IPR046848">
    <property type="entry name" value="E_motif"/>
</dbReference>
<dbReference type="InterPro" id="IPR002885">
    <property type="entry name" value="Pentatricopeptide_rpt"/>
</dbReference>
<dbReference type="InterPro" id="IPR046960">
    <property type="entry name" value="PPR_At4g14850-like_plant"/>
</dbReference>
<dbReference type="InterPro" id="IPR011990">
    <property type="entry name" value="TPR-like_helical_dom_sf"/>
</dbReference>
<dbReference type="NCBIfam" id="TIGR00756">
    <property type="entry name" value="PPR"/>
    <property type="match status" value="6"/>
</dbReference>
<dbReference type="PANTHER" id="PTHR47926">
    <property type="entry name" value="PENTATRICOPEPTIDE REPEAT-CONTAINING PROTEIN"/>
    <property type="match status" value="1"/>
</dbReference>
<dbReference type="PANTHER" id="PTHR47926:SF415">
    <property type="entry name" value="PENTATRICOPEPTIDE REPEAT-CONTAINING PROTEIN"/>
    <property type="match status" value="1"/>
</dbReference>
<dbReference type="Pfam" id="PF20431">
    <property type="entry name" value="E_motif"/>
    <property type="match status" value="1"/>
</dbReference>
<dbReference type="Pfam" id="PF01535">
    <property type="entry name" value="PPR"/>
    <property type="match status" value="3"/>
</dbReference>
<dbReference type="Pfam" id="PF13041">
    <property type="entry name" value="PPR_2"/>
    <property type="match status" value="2"/>
</dbReference>
<dbReference type="SUPFAM" id="SSF48452">
    <property type="entry name" value="TPR-like"/>
    <property type="match status" value="1"/>
</dbReference>
<dbReference type="PROSITE" id="PS51375">
    <property type="entry name" value="PPR"/>
    <property type="match status" value="12"/>
</dbReference>
<accession>Q9SIL5</accession>
<reference key="1">
    <citation type="journal article" date="1999" name="Nature">
        <title>Sequence and analysis of chromosome 2 of the plant Arabidopsis thaliana.</title>
        <authorList>
            <person name="Lin X."/>
            <person name="Kaul S."/>
            <person name="Rounsley S.D."/>
            <person name="Shea T.P."/>
            <person name="Benito M.-I."/>
            <person name="Town C.D."/>
            <person name="Fujii C.Y."/>
            <person name="Mason T.M."/>
            <person name="Bowman C.L."/>
            <person name="Barnstead M.E."/>
            <person name="Feldblyum T.V."/>
            <person name="Buell C.R."/>
            <person name="Ketchum K.A."/>
            <person name="Lee J.J."/>
            <person name="Ronning C.M."/>
            <person name="Koo H.L."/>
            <person name="Moffat K.S."/>
            <person name="Cronin L.A."/>
            <person name="Shen M."/>
            <person name="Pai G."/>
            <person name="Van Aken S."/>
            <person name="Umayam L."/>
            <person name="Tallon L.J."/>
            <person name="Gill J.E."/>
            <person name="Adams M.D."/>
            <person name="Carrera A.J."/>
            <person name="Creasy T.H."/>
            <person name="Goodman H.M."/>
            <person name="Somerville C.R."/>
            <person name="Copenhaver G.P."/>
            <person name="Preuss D."/>
            <person name="Nierman W.C."/>
            <person name="White O."/>
            <person name="Eisen J.A."/>
            <person name="Salzberg S.L."/>
            <person name="Fraser C.M."/>
            <person name="Venter J.C."/>
        </authorList>
    </citation>
    <scope>NUCLEOTIDE SEQUENCE [LARGE SCALE GENOMIC DNA]</scope>
    <source>
        <strain>cv. Columbia</strain>
    </source>
</reference>
<reference key="2">
    <citation type="journal article" date="2017" name="Plant J.">
        <title>Araport11: a complete reannotation of the Arabidopsis thaliana reference genome.</title>
        <authorList>
            <person name="Cheng C.Y."/>
            <person name="Krishnakumar V."/>
            <person name="Chan A.P."/>
            <person name="Thibaud-Nissen F."/>
            <person name="Schobel S."/>
            <person name="Town C.D."/>
        </authorList>
    </citation>
    <scope>GENOME REANNOTATION</scope>
    <source>
        <strain>cv. Columbia</strain>
    </source>
</reference>
<reference key="3">
    <citation type="journal article" date="2006" name="Plant Biotechnol. J.">
        <title>Simultaneous high-throughput recombinational cloning of open reading frames in closed and open configurations.</title>
        <authorList>
            <person name="Underwood B.A."/>
            <person name="Vanderhaeghen R."/>
            <person name="Whitford R."/>
            <person name="Town C.D."/>
            <person name="Hilson P."/>
        </authorList>
    </citation>
    <scope>NUCLEOTIDE SEQUENCE [LARGE SCALE MRNA]</scope>
    <source>
        <strain>cv. Columbia</strain>
    </source>
</reference>
<reference key="4">
    <citation type="journal article" date="2004" name="Plant Cell">
        <title>Genome-wide analysis of Arabidopsis pentatricopeptide repeat proteins reveals their essential role in organelle biogenesis.</title>
        <authorList>
            <person name="Lurin C."/>
            <person name="Andres C."/>
            <person name="Aubourg S."/>
            <person name="Bellaoui M."/>
            <person name="Bitton F."/>
            <person name="Bruyere C."/>
            <person name="Caboche M."/>
            <person name="Debast C."/>
            <person name="Gualberto J."/>
            <person name="Hoffmann B."/>
            <person name="Lecharny A."/>
            <person name="Le Ret M."/>
            <person name="Martin-Magniette M.-L."/>
            <person name="Mireau H."/>
            <person name="Peeters N."/>
            <person name="Renou J.-P."/>
            <person name="Szurek B."/>
            <person name="Taconnat L."/>
            <person name="Small I."/>
        </authorList>
    </citation>
    <scope>GENE FAMILY</scope>
</reference>
<keyword id="KW-1185">Reference proteome</keyword>
<keyword id="KW-0677">Repeat</keyword>
<sequence length="534" mass="60880">MAFHGIREVENYFIPFLQRVKSRNEWKKINASIIIHGLSQSSFMVTKMVDFCDKIEDMDYATRLFNQVSNPNVFLYNSIIRAYTHNSLYCDVIRIYKQLLRKSFELPDRFTFPFMFKSCASLGSCYLGKQVHGHLCKFGPRFHVVTENALIDMYMKFDDLVDAHKVFDEMYERDVISWNSLLSGYARLGQMKKAKGLFHLMLDKTIVSWTAMISGYTGIGCYVEAMDFFREMQLAGIEPDEISLISVLPSCAQLGSLELGKWIHLYAERRGFLKQTGVCNALIEMYSKCGVISQAIQLFGQMEGKDVISWSTMISGYAYHGNAHGAIETFNEMQRAKVKPNGITFLGLLSACSHVGMWQEGLRYFDMMRQDYQIEPKIEHYGCLIDVLARAGKLERAVEITKTMPMKPDSKIWGSLLSSCRTPGNLDVALVAMDHLVELEPEDMGNYVLLANIYADLGKWEDVSRLRKMIRNENMKKTPGGSLIEVNNIVQEFVSGDNSKPFWTEISIVLQLFTSHQDQDVITNNNALAFIGIV</sequence>
<protein>
    <recommendedName>
        <fullName>Pentatricopeptide repeat-containing protein At2g20540</fullName>
    </recommendedName>
</protein>